<organism>
    <name type="scientific">Aspergillus niger (strain ATCC MYA-4892 / CBS 513.88 / FGSC A1513)</name>
    <dbReference type="NCBI Taxonomy" id="425011"/>
    <lineage>
        <taxon>Eukaryota</taxon>
        <taxon>Fungi</taxon>
        <taxon>Dikarya</taxon>
        <taxon>Ascomycota</taxon>
        <taxon>Pezizomycotina</taxon>
        <taxon>Eurotiomycetes</taxon>
        <taxon>Eurotiomycetidae</taxon>
        <taxon>Eurotiales</taxon>
        <taxon>Aspergillaceae</taxon>
        <taxon>Aspergillus</taxon>
        <taxon>Aspergillus subgen. Circumdati</taxon>
    </lineage>
</organism>
<keyword id="KW-0963">Cytoplasm</keyword>
<keyword id="KW-1185">Reference proteome</keyword>
<keyword id="KW-0677">Repeat</keyword>
<keyword id="KW-0802">TPR repeat</keyword>
<sequence length="1249" mass="138709">MAQTNGELEHSKETPEQLTNGNHPEETQEEDNTGGLFQITVKLPHEPYKIQVMVSSQEQVQDVRQSIVELPSTFQYTCFHLEFNGQRINDFVELSEVPDLKADSEITLVEDPYNEKEARMHVVRMRELVGAAGDRVDNLHGISAGLSLHDAISAEVADASEKEHSLSKYDITSSPSLKTILPRAEAPLPKTVKAISLSPWNPVPYHLRQKGHLLYLQVTTNEGEQFQITSHISGFYVNKNSNMKFDPSPKTIPKSGRAHSLLTLIAHLSPSFNASFEALQESNNKKDLLTTFPFQNAIPNNPWLVPPPTSTANAHQPDITRSQENYLISGVDNAETLRDWNEEFQTTRELPRETVQDRVFRERLTSKLFADYNEAAARGAVLVARGEVAPLNPTESRDAQIFVYNNIFYSFGADGVGTFASEGGDEAARVAVGKDVVGIKAVNQLDINGLFTPGTVVVDYLGKRIVGQSIVPGIFKQREPGEHQIDYGGVEGKDVVATHPDFVSVFEKMSKALRVKKHAVWDKEGQRHELEGSVETKGLLGTDGRKYVLDLYRVTPLDVMWQEEEGSDAYPHRMSVLRLELVESYWRHKMSQYVKAEVERRRSAKAEADAAKAESSEATESKEQASEEKSEEDQERVDISGFSLALNPDVCSGQVPQTDEEKEQWAQDEKEVRETCDYLRSKIMPELIQDLHDGDVGFPMDGQSLSQLLHKRGINIRYLGKLAQLSKEKGSRLDALSTLLVQEMIARAFKHIANEYLRNVPAPFVASCISHLLNCLLGADVNPNPVAEIDASLRSIYPEGDFSFEKATPATLRAAIEKQVTIRYRFTLEAEWFNSLRHLQLLRDLSIKLGLQLGAREFIFDKSQIPAKAPATNGANGVAQEEGKNKKKKKGGDSSSPARAAKEEKPILAIVPDDILNIVPLVKDASPRSSLAEEALEAGRISLMQNQKQLGQELILESLSLHEQIYGILHPEVAKLYHQLSMLYYQTDEKEAAVELARKAVIVTERTLGVDSADTILSYLNLSLFEHASGNTKTALAYIKHAMDLWKIIYGANHPDSITTMNNAAVMLQHLKQYSDSRKWFEASLEVCESLFGRQSINTATILFQLAQALALDQDSKGAVGKMRDAYNIFLSQLGPNDRNTKEAETWLEQLTQNAVSIAKHAKDIQARRLRRVNMNPRSLGTKIQPQVGQTAPEVAGARAPGSASLDSRSVDELLKFIEGGDAGSSKAKQKKRAAASNPKLRGSKKSSA</sequence>
<accession>A2QDB9</accession>
<evidence type="ECO:0000255" key="1">
    <source>
        <dbReference type="HAMAP-Rule" id="MF_03013"/>
    </source>
</evidence>
<evidence type="ECO:0000255" key="2">
    <source>
        <dbReference type="PROSITE-ProRule" id="PRU01167"/>
    </source>
</evidence>
<evidence type="ECO:0000256" key="3">
    <source>
        <dbReference type="SAM" id="MobiDB-lite"/>
    </source>
</evidence>
<comment type="function">
    <text evidence="1">mRNA-binding protein involved in proper cytoplasmic distribution of mitochondria.</text>
</comment>
<comment type="subunit">
    <text evidence="1">May associate with the eukaryotic translation initiation factor 3 (eIF-3) complex.</text>
</comment>
<comment type="subcellular location">
    <subcellularLocation>
        <location evidence="1">Cytoplasm</location>
    </subcellularLocation>
</comment>
<comment type="similarity">
    <text evidence="1">Belongs to the CLU family.</text>
</comment>
<protein>
    <recommendedName>
        <fullName evidence="1">Clustered mitochondria protein homolog</fullName>
    </recommendedName>
    <alternativeName>
        <fullName evidence="1">Protein TIF31 homolog</fullName>
    </alternativeName>
</protein>
<dbReference type="EMBL" id="AM270014">
    <property type="protein sequence ID" value="CAL00651.1"/>
    <property type="molecule type" value="Genomic_DNA"/>
</dbReference>
<dbReference type="RefSeq" id="XP_001399789.1">
    <property type="nucleotide sequence ID" value="XM_001399752.2"/>
</dbReference>
<dbReference type="SMR" id="A2QDB9"/>
<dbReference type="EnsemblFungi" id="CAL00651">
    <property type="protein sequence ID" value="CAL00651"/>
    <property type="gene ID" value="An02g06530"/>
</dbReference>
<dbReference type="GeneID" id="4979144"/>
<dbReference type="KEGG" id="ang:An02g06530"/>
<dbReference type="VEuPathDB" id="FungiDB:An02g06530"/>
<dbReference type="HOGENOM" id="CLU_003256_2_0_1"/>
<dbReference type="Proteomes" id="UP000006706">
    <property type="component" value="Chromosome 4R"/>
</dbReference>
<dbReference type="GO" id="GO:0005737">
    <property type="term" value="C:cytoplasm"/>
    <property type="evidence" value="ECO:0007669"/>
    <property type="project" value="UniProtKB-SubCell"/>
</dbReference>
<dbReference type="GO" id="GO:0003729">
    <property type="term" value="F:mRNA binding"/>
    <property type="evidence" value="ECO:0007669"/>
    <property type="project" value="TreeGrafter"/>
</dbReference>
<dbReference type="GO" id="GO:0048312">
    <property type="term" value="P:intracellular distribution of mitochondria"/>
    <property type="evidence" value="ECO:0007669"/>
    <property type="project" value="TreeGrafter"/>
</dbReference>
<dbReference type="GO" id="GO:0007005">
    <property type="term" value="P:mitochondrion organization"/>
    <property type="evidence" value="ECO:0007669"/>
    <property type="project" value="UniProtKB-UniRule"/>
</dbReference>
<dbReference type="CDD" id="cd15466">
    <property type="entry name" value="CLU-central"/>
    <property type="match status" value="1"/>
</dbReference>
<dbReference type="FunFam" id="1.25.40.10:FF:000293">
    <property type="entry name" value="Clustered mitochondria protein homolog"/>
    <property type="match status" value="1"/>
</dbReference>
<dbReference type="FunFam" id="1.25.40.10:FF:000532">
    <property type="entry name" value="Clustered mitochondria protein homolog"/>
    <property type="match status" value="1"/>
</dbReference>
<dbReference type="Gene3D" id="1.25.40.10">
    <property type="entry name" value="Tetratricopeptide repeat domain"/>
    <property type="match status" value="2"/>
</dbReference>
<dbReference type="HAMAP" id="MF_03013">
    <property type="entry name" value="CLU"/>
    <property type="match status" value="1"/>
</dbReference>
<dbReference type="InterPro" id="IPR033646">
    <property type="entry name" value="CLU-central"/>
</dbReference>
<dbReference type="InterPro" id="IPR025697">
    <property type="entry name" value="CLU_dom"/>
</dbReference>
<dbReference type="InterPro" id="IPR028275">
    <property type="entry name" value="CLU_N"/>
</dbReference>
<dbReference type="InterPro" id="IPR027523">
    <property type="entry name" value="CLU_prot"/>
</dbReference>
<dbReference type="InterPro" id="IPR023231">
    <property type="entry name" value="GSKIP_dom_sf"/>
</dbReference>
<dbReference type="InterPro" id="IPR011990">
    <property type="entry name" value="TPR-like_helical_dom_sf"/>
</dbReference>
<dbReference type="InterPro" id="IPR019734">
    <property type="entry name" value="TPR_rpt"/>
</dbReference>
<dbReference type="PANTHER" id="PTHR12601:SF6">
    <property type="entry name" value="CLUSTERED MITOCHONDRIA PROTEIN HOMOLOG"/>
    <property type="match status" value="1"/>
</dbReference>
<dbReference type="PANTHER" id="PTHR12601">
    <property type="entry name" value="EUKARYOTIC TRANSLATION INITIATION FACTOR 3 SUBUNIT EIF-3"/>
    <property type="match status" value="1"/>
</dbReference>
<dbReference type="Pfam" id="PF13236">
    <property type="entry name" value="CLU"/>
    <property type="match status" value="1"/>
</dbReference>
<dbReference type="Pfam" id="PF15044">
    <property type="entry name" value="CLU_N"/>
    <property type="match status" value="1"/>
</dbReference>
<dbReference type="Pfam" id="PF12807">
    <property type="entry name" value="eIF3_p135"/>
    <property type="match status" value="1"/>
</dbReference>
<dbReference type="Pfam" id="PF13374">
    <property type="entry name" value="TPR_10"/>
    <property type="match status" value="2"/>
</dbReference>
<dbReference type="Pfam" id="PF13424">
    <property type="entry name" value="TPR_12"/>
    <property type="match status" value="1"/>
</dbReference>
<dbReference type="SUPFAM" id="SSF103107">
    <property type="entry name" value="Hypothetical protein c14orf129, hspc210"/>
    <property type="match status" value="1"/>
</dbReference>
<dbReference type="SUPFAM" id="SSF48452">
    <property type="entry name" value="TPR-like"/>
    <property type="match status" value="2"/>
</dbReference>
<dbReference type="PROSITE" id="PS51823">
    <property type="entry name" value="CLU"/>
    <property type="match status" value="1"/>
</dbReference>
<dbReference type="PROSITE" id="PS50005">
    <property type="entry name" value="TPR"/>
    <property type="match status" value="1"/>
</dbReference>
<name>CLU_ASPNC</name>
<gene>
    <name evidence="1" type="primary">clu1</name>
    <name type="synonym">tif31</name>
    <name type="ORF">An02g06530</name>
</gene>
<proteinExistence type="inferred from homology"/>
<feature type="chain" id="PRO_0000366396" description="Clustered mitochondria protein homolog">
    <location>
        <begin position="1"/>
        <end position="1249"/>
    </location>
</feature>
<feature type="domain" description="Clu" evidence="2">
    <location>
        <begin position="318"/>
        <end position="562"/>
    </location>
</feature>
<feature type="repeat" description="TPR 1">
    <location>
        <begin position="974"/>
        <end position="1007"/>
    </location>
</feature>
<feature type="repeat" description="TPR 2">
    <location>
        <begin position="1016"/>
        <end position="1049"/>
    </location>
</feature>
<feature type="repeat" description="TPR 3">
    <location>
        <begin position="1058"/>
        <end position="1091"/>
    </location>
</feature>
<feature type="region of interest" description="Disordered" evidence="3">
    <location>
        <begin position="1"/>
        <end position="32"/>
    </location>
</feature>
<feature type="region of interest" description="Disordered" evidence="3">
    <location>
        <begin position="605"/>
        <end position="636"/>
    </location>
</feature>
<feature type="region of interest" description="Disordered" evidence="3">
    <location>
        <begin position="868"/>
        <end position="903"/>
    </location>
</feature>
<feature type="region of interest" description="Disordered" evidence="3">
    <location>
        <begin position="1174"/>
        <end position="1249"/>
    </location>
</feature>
<feature type="compositionally biased region" description="Basic and acidic residues" evidence="3">
    <location>
        <begin position="605"/>
        <end position="628"/>
    </location>
</feature>
<feature type="compositionally biased region" description="Polar residues" evidence="3">
    <location>
        <begin position="1176"/>
        <end position="1190"/>
    </location>
</feature>
<reference key="1">
    <citation type="journal article" date="2007" name="Nat. Biotechnol.">
        <title>Genome sequencing and analysis of the versatile cell factory Aspergillus niger CBS 513.88.</title>
        <authorList>
            <person name="Pel H.J."/>
            <person name="de Winde J.H."/>
            <person name="Archer D.B."/>
            <person name="Dyer P.S."/>
            <person name="Hofmann G."/>
            <person name="Schaap P.J."/>
            <person name="Turner G."/>
            <person name="de Vries R.P."/>
            <person name="Albang R."/>
            <person name="Albermann K."/>
            <person name="Andersen M.R."/>
            <person name="Bendtsen J.D."/>
            <person name="Benen J.A.E."/>
            <person name="van den Berg M."/>
            <person name="Breestraat S."/>
            <person name="Caddick M.X."/>
            <person name="Contreras R."/>
            <person name="Cornell M."/>
            <person name="Coutinho P.M."/>
            <person name="Danchin E.G.J."/>
            <person name="Debets A.J.M."/>
            <person name="Dekker P."/>
            <person name="van Dijck P.W.M."/>
            <person name="van Dijk A."/>
            <person name="Dijkhuizen L."/>
            <person name="Driessen A.J.M."/>
            <person name="d'Enfert C."/>
            <person name="Geysens S."/>
            <person name="Goosen C."/>
            <person name="Groot G.S.P."/>
            <person name="de Groot P.W.J."/>
            <person name="Guillemette T."/>
            <person name="Henrissat B."/>
            <person name="Herweijer M."/>
            <person name="van den Hombergh J.P.T.W."/>
            <person name="van den Hondel C.A.M.J.J."/>
            <person name="van der Heijden R.T.J.M."/>
            <person name="van der Kaaij R.M."/>
            <person name="Klis F.M."/>
            <person name="Kools H.J."/>
            <person name="Kubicek C.P."/>
            <person name="van Kuyk P.A."/>
            <person name="Lauber J."/>
            <person name="Lu X."/>
            <person name="van der Maarel M.J.E.C."/>
            <person name="Meulenberg R."/>
            <person name="Menke H."/>
            <person name="Mortimer M.A."/>
            <person name="Nielsen J."/>
            <person name="Oliver S.G."/>
            <person name="Olsthoorn M."/>
            <person name="Pal K."/>
            <person name="van Peij N.N.M.E."/>
            <person name="Ram A.F.J."/>
            <person name="Rinas U."/>
            <person name="Roubos J.A."/>
            <person name="Sagt C.M.J."/>
            <person name="Schmoll M."/>
            <person name="Sun J."/>
            <person name="Ussery D."/>
            <person name="Varga J."/>
            <person name="Vervecken W."/>
            <person name="van de Vondervoort P.J.J."/>
            <person name="Wedler H."/>
            <person name="Woesten H.A.B."/>
            <person name="Zeng A.-P."/>
            <person name="van Ooyen A.J.J."/>
            <person name="Visser J."/>
            <person name="Stam H."/>
        </authorList>
    </citation>
    <scope>NUCLEOTIDE SEQUENCE [LARGE SCALE GENOMIC DNA]</scope>
    <source>
        <strain>ATCC MYA-4892 / CBS 513.88 / FGSC A1513</strain>
    </source>
</reference>